<dbReference type="EC" id="3.6.5.-" evidence="1"/>
<dbReference type="EMBL" id="AE005674">
    <property type="protein sequence ID" value="AAN45376.1"/>
    <property type="molecule type" value="Genomic_DNA"/>
</dbReference>
<dbReference type="EMBL" id="AE014073">
    <property type="protein sequence ID" value="AAP18822.1"/>
    <property type="molecule type" value="Genomic_DNA"/>
</dbReference>
<dbReference type="SMR" id="P0A3B4"/>
<dbReference type="STRING" id="198214.SF3941"/>
<dbReference type="PaxDb" id="198214-SF3941"/>
<dbReference type="DNASU" id="1080929"/>
<dbReference type="KEGG" id="sfl:SF3941"/>
<dbReference type="KEGG" id="sfx:S3805"/>
<dbReference type="PATRIC" id="fig|198214.7.peg.4645"/>
<dbReference type="HOGENOM" id="CLU_017016_4_0_6"/>
<dbReference type="Proteomes" id="UP000001006">
    <property type="component" value="Chromosome"/>
</dbReference>
<dbReference type="Proteomes" id="UP000002673">
    <property type="component" value="Chromosome"/>
</dbReference>
<dbReference type="GO" id="GO:0005829">
    <property type="term" value="C:cytosol"/>
    <property type="evidence" value="ECO:0007669"/>
    <property type="project" value="TreeGrafter"/>
</dbReference>
<dbReference type="GO" id="GO:1990904">
    <property type="term" value="C:ribonucleoprotein complex"/>
    <property type="evidence" value="ECO:0007669"/>
    <property type="project" value="TreeGrafter"/>
</dbReference>
<dbReference type="GO" id="GO:0005525">
    <property type="term" value="F:GTP binding"/>
    <property type="evidence" value="ECO:0007669"/>
    <property type="project" value="UniProtKB-UniRule"/>
</dbReference>
<dbReference type="GO" id="GO:0003924">
    <property type="term" value="F:GTPase activity"/>
    <property type="evidence" value="ECO:0007669"/>
    <property type="project" value="UniProtKB-UniRule"/>
</dbReference>
<dbReference type="GO" id="GO:0097216">
    <property type="term" value="F:guanosine tetraphosphate binding"/>
    <property type="evidence" value="ECO:0007669"/>
    <property type="project" value="UniProtKB-ARBA"/>
</dbReference>
<dbReference type="GO" id="GO:0043022">
    <property type="term" value="F:ribosome binding"/>
    <property type="evidence" value="ECO:0007669"/>
    <property type="project" value="UniProtKB-UniRule"/>
</dbReference>
<dbReference type="GO" id="GO:0019843">
    <property type="term" value="F:rRNA binding"/>
    <property type="evidence" value="ECO:0007669"/>
    <property type="project" value="UniProtKB-KW"/>
</dbReference>
<dbReference type="GO" id="GO:0000049">
    <property type="term" value="F:tRNA binding"/>
    <property type="evidence" value="ECO:0007669"/>
    <property type="project" value="UniProtKB-KW"/>
</dbReference>
<dbReference type="GO" id="GO:0000027">
    <property type="term" value="P:ribosomal large subunit assembly"/>
    <property type="evidence" value="ECO:0007669"/>
    <property type="project" value="UniProtKB-UniRule"/>
</dbReference>
<dbReference type="CDD" id="cd16263">
    <property type="entry name" value="BipA_III"/>
    <property type="match status" value="1"/>
</dbReference>
<dbReference type="CDD" id="cd03710">
    <property type="entry name" value="BipA_TypA_C"/>
    <property type="match status" value="1"/>
</dbReference>
<dbReference type="CDD" id="cd03691">
    <property type="entry name" value="BipA_TypA_II"/>
    <property type="match status" value="1"/>
</dbReference>
<dbReference type="CDD" id="cd01891">
    <property type="entry name" value="TypA_BipA"/>
    <property type="match status" value="1"/>
</dbReference>
<dbReference type="FunFam" id="2.40.30.10:FF:000016">
    <property type="entry name" value="GTP-binding protein TypA"/>
    <property type="match status" value="1"/>
</dbReference>
<dbReference type="FunFam" id="2.40.50.250:FF:000001">
    <property type="entry name" value="GTP-binding protein TypA"/>
    <property type="match status" value="1"/>
</dbReference>
<dbReference type="FunFam" id="3.30.70.240:FF:000002">
    <property type="entry name" value="GTP-binding protein TypA"/>
    <property type="match status" value="1"/>
</dbReference>
<dbReference type="FunFam" id="3.30.70.870:FF:000003">
    <property type="entry name" value="GTP-binding protein TypA"/>
    <property type="match status" value="1"/>
</dbReference>
<dbReference type="FunFam" id="3.40.50.300:FF:000055">
    <property type="entry name" value="GTP-binding protein TypA"/>
    <property type="match status" value="1"/>
</dbReference>
<dbReference type="Gene3D" id="3.30.70.240">
    <property type="match status" value="1"/>
</dbReference>
<dbReference type="Gene3D" id="2.40.50.250">
    <property type="entry name" value="bipa protein"/>
    <property type="match status" value="1"/>
</dbReference>
<dbReference type="Gene3D" id="3.30.70.870">
    <property type="entry name" value="Elongation Factor G (Translational Gtpase), domain 3"/>
    <property type="match status" value="1"/>
</dbReference>
<dbReference type="Gene3D" id="3.40.50.300">
    <property type="entry name" value="P-loop containing nucleotide triphosphate hydrolases"/>
    <property type="match status" value="1"/>
</dbReference>
<dbReference type="Gene3D" id="2.40.30.10">
    <property type="entry name" value="Translation factors"/>
    <property type="match status" value="1"/>
</dbReference>
<dbReference type="HAMAP" id="MF_00849">
    <property type="entry name" value="BipA"/>
    <property type="match status" value="1"/>
</dbReference>
<dbReference type="InterPro" id="IPR006298">
    <property type="entry name" value="BipA"/>
</dbReference>
<dbReference type="InterPro" id="IPR048876">
    <property type="entry name" value="BipA_C"/>
</dbReference>
<dbReference type="InterPro" id="IPR047041">
    <property type="entry name" value="BipA_GTP-bd_dom"/>
</dbReference>
<dbReference type="InterPro" id="IPR047042">
    <property type="entry name" value="BipA_II"/>
</dbReference>
<dbReference type="InterPro" id="IPR047043">
    <property type="entry name" value="BipA_III"/>
</dbReference>
<dbReference type="InterPro" id="IPR035651">
    <property type="entry name" value="BipA_V"/>
</dbReference>
<dbReference type="InterPro" id="IPR035647">
    <property type="entry name" value="EFG_III/V"/>
</dbReference>
<dbReference type="InterPro" id="IPR000640">
    <property type="entry name" value="EFG_V-like"/>
</dbReference>
<dbReference type="InterPro" id="IPR004161">
    <property type="entry name" value="EFTu-like_2"/>
</dbReference>
<dbReference type="InterPro" id="IPR031157">
    <property type="entry name" value="G_TR_CS"/>
</dbReference>
<dbReference type="InterPro" id="IPR027417">
    <property type="entry name" value="P-loop_NTPase"/>
</dbReference>
<dbReference type="InterPro" id="IPR005225">
    <property type="entry name" value="Small_GTP-bd"/>
</dbReference>
<dbReference type="InterPro" id="IPR000795">
    <property type="entry name" value="T_Tr_GTP-bd_dom"/>
</dbReference>
<dbReference type="InterPro" id="IPR009000">
    <property type="entry name" value="Transl_B-barrel_sf"/>
</dbReference>
<dbReference type="InterPro" id="IPR042116">
    <property type="entry name" value="TypA/BipA_C"/>
</dbReference>
<dbReference type="NCBIfam" id="NF007583">
    <property type="entry name" value="PRK10218.1"/>
    <property type="match status" value="1"/>
</dbReference>
<dbReference type="NCBIfam" id="TIGR00231">
    <property type="entry name" value="small_GTP"/>
    <property type="match status" value="1"/>
</dbReference>
<dbReference type="NCBIfam" id="TIGR01394">
    <property type="entry name" value="TypA_BipA"/>
    <property type="match status" value="1"/>
</dbReference>
<dbReference type="PANTHER" id="PTHR42908:SF8">
    <property type="entry name" value="TR-TYPE G DOMAIN-CONTAINING PROTEIN"/>
    <property type="match status" value="1"/>
</dbReference>
<dbReference type="PANTHER" id="PTHR42908">
    <property type="entry name" value="TRANSLATION ELONGATION FACTOR-RELATED"/>
    <property type="match status" value="1"/>
</dbReference>
<dbReference type="Pfam" id="PF21018">
    <property type="entry name" value="BipA_C"/>
    <property type="match status" value="1"/>
</dbReference>
<dbReference type="Pfam" id="PF00679">
    <property type="entry name" value="EFG_C"/>
    <property type="match status" value="1"/>
</dbReference>
<dbReference type="Pfam" id="PF00009">
    <property type="entry name" value="GTP_EFTU"/>
    <property type="match status" value="1"/>
</dbReference>
<dbReference type="Pfam" id="PF03144">
    <property type="entry name" value="GTP_EFTU_D2"/>
    <property type="match status" value="1"/>
</dbReference>
<dbReference type="PRINTS" id="PR00315">
    <property type="entry name" value="ELONGATNFCT"/>
</dbReference>
<dbReference type="SUPFAM" id="SSF54980">
    <property type="entry name" value="EF-G C-terminal domain-like"/>
    <property type="match status" value="2"/>
</dbReference>
<dbReference type="SUPFAM" id="SSF52540">
    <property type="entry name" value="P-loop containing nucleoside triphosphate hydrolases"/>
    <property type="match status" value="1"/>
</dbReference>
<dbReference type="SUPFAM" id="SSF50447">
    <property type="entry name" value="Translation proteins"/>
    <property type="match status" value="1"/>
</dbReference>
<dbReference type="PROSITE" id="PS00301">
    <property type="entry name" value="G_TR_1"/>
    <property type="match status" value="1"/>
</dbReference>
<dbReference type="PROSITE" id="PS51722">
    <property type="entry name" value="G_TR_2"/>
    <property type="match status" value="1"/>
</dbReference>
<organism>
    <name type="scientific">Shigella flexneri</name>
    <dbReference type="NCBI Taxonomy" id="623"/>
    <lineage>
        <taxon>Bacteria</taxon>
        <taxon>Pseudomonadati</taxon>
        <taxon>Pseudomonadota</taxon>
        <taxon>Gammaproteobacteria</taxon>
        <taxon>Enterobacterales</taxon>
        <taxon>Enterobacteriaceae</taxon>
        <taxon>Shigella</taxon>
    </lineage>
</organism>
<name>BIPA_SHIFL</name>
<evidence type="ECO:0000255" key="1">
    <source>
        <dbReference type="HAMAP-Rule" id="MF_00849"/>
    </source>
</evidence>
<evidence type="ECO:0000305" key="2"/>
<sequence>MIEKLRNIAIIAHVDHGKTTLVDKLLQQSGTFDSRAETQERVMDSNDLEKERGITILAKNTAIKWNDYRINIVDTPGHADFGGEVERVMSMVDSVLLVVDAFDGPMPQTRFVTKKAFAYGLKPIVVINKVDRPGARPDWVVDQVFDLFVNLDATDEQLDFPIVYASALNGIAGLDHEDMAEDMTPLYQAIVDHVPAPDVDLDGPFQMQISQLDYNSYVGVIGIGRIKRGKVKPNQQVTIIDSEGKTRNAKVGKVLGHLGLERIETDLAEAGDIVAITGLGELNISDTVCDTQNVEALPALSVDEPTVSMFFCVNTSPFCGKEGKFVTSRQILDRLNKELVHNVALRVEETEDADAFRVSGRGELHLSVLIENMRREGFELAVSRPKVIFREIDGRKQEPYENVTLDVEEQHQGSVMQALGERKGDLKNMNPDGKGRVRLDYVIPSRGLIGFRSEFMTMTSGTGLLYSTFSHYDDVRPGEVGQRQNGVLISNGQGKAVAFALFGLQDRGKLFLGHGAEVYEGQIIGIHSRSNDLTVNCLTGKKLTNMRASGTDEAVVLVPPIRMTLEQALEFIDDDELVEVTPTSIRIRKRHLTENDRRRANRAPKDD</sequence>
<keyword id="KW-0963">Cytoplasm</keyword>
<keyword id="KW-0342">GTP-binding</keyword>
<keyword id="KW-0378">Hydrolase</keyword>
<keyword id="KW-0547">Nucleotide-binding</keyword>
<keyword id="KW-1185">Reference proteome</keyword>
<keyword id="KW-0690">Ribosome biogenesis</keyword>
<keyword id="KW-0694">RNA-binding</keyword>
<keyword id="KW-0699">rRNA-binding</keyword>
<keyword id="KW-0820">tRNA-binding</keyword>
<feature type="chain" id="PRO_0000091557" description="Large ribosomal subunit assembly factor BipA">
    <location>
        <begin position="1"/>
        <end position="607"/>
    </location>
</feature>
<feature type="domain" description="tr-type G" evidence="1">
    <location>
        <begin position="3"/>
        <end position="198"/>
    </location>
</feature>
<feature type="binding site" evidence="1">
    <location>
        <begin position="15"/>
        <end position="20"/>
    </location>
    <ligand>
        <name>GTP</name>
        <dbReference type="ChEBI" id="CHEBI:37565"/>
    </ligand>
</feature>
<feature type="binding site" evidence="1">
    <location>
        <begin position="128"/>
        <end position="131"/>
    </location>
    <ligand>
        <name>GTP</name>
        <dbReference type="ChEBI" id="CHEBI:37565"/>
    </ligand>
</feature>
<feature type="sequence conflict" description="In Ref. 2; AAP18822." evidence="2" ref="2">
    <original>C</original>
    <variation>S</variation>
    <location>
        <position position="319"/>
    </location>
</feature>
<feature type="sequence conflict" description="In Ref. 2; AAP18822." evidence="2" ref="2">
    <original>E</original>
    <variation>K</variation>
    <location>
        <position position="338"/>
    </location>
</feature>
<proteinExistence type="inferred from homology"/>
<reference key="1">
    <citation type="journal article" date="2002" name="Nucleic Acids Res.">
        <title>Genome sequence of Shigella flexneri 2a: insights into pathogenicity through comparison with genomes of Escherichia coli K12 and O157.</title>
        <authorList>
            <person name="Jin Q."/>
            <person name="Yuan Z."/>
            <person name="Xu J."/>
            <person name="Wang Y."/>
            <person name="Shen Y."/>
            <person name="Lu W."/>
            <person name="Wang J."/>
            <person name="Liu H."/>
            <person name="Yang J."/>
            <person name="Yang F."/>
            <person name="Zhang X."/>
            <person name="Zhang J."/>
            <person name="Yang G."/>
            <person name="Wu H."/>
            <person name="Qu D."/>
            <person name="Dong J."/>
            <person name="Sun L."/>
            <person name="Xue Y."/>
            <person name="Zhao A."/>
            <person name="Gao Y."/>
            <person name="Zhu J."/>
            <person name="Kan B."/>
            <person name="Ding K."/>
            <person name="Chen S."/>
            <person name="Cheng H."/>
            <person name="Yao Z."/>
            <person name="He B."/>
            <person name="Chen R."/>
            <person name="Ma D."/>
            <person name="Qiang B."/>
            <person name="Wen Y."/>
            <person name="Hou Y."/>
            <person name="Yu J."/>
        </authorList>
    </citation>
    <scope>NUCLEOTIDE SEQUENCE [LARGE SCALE GENOMIC DNA]</scope>
    <source>
        <strain>301 / Serotype 2a</strain>
    </source>
</reference>
<reference key="2">
    <citation type="journal article" date="2003" name="Infect. Immun.">
        <title>Complete genome sequence and comparative genomics of Shigella flexneri serotype 2a strain 2457T.</title>
        <authorList>
            <person name="Wei J."/>
            <person name="Goldberg M.B."/>
            <person name="Burland V."/>
            <person name="Venkatesan M.M."/>
            <person name="Deng W."/>
            <person name="Fournier G."/>
            <person name="Mayhew G.F."/>
            <person name="Plunkett G. III"/>
            <person name="Rose D.J."/>
            <person name="Darling A."/>
            <person name="Mau B."/>
            <person name="Perna N.T."/>
            <person name="Payne S.M."/>
            <person name="Runyen-Janecky L.J."/>
            <person name="Zhou S."/>
            <person name="Schwartz D.C."/>
            <person name="Blattner F.R."/>
        </authorList>
    </citation>
    <scope>NUCLEOTIDE SEQUENCE [LARGE SCALE GENOMIC DNA]</scope>
    <source>
        <strain>ATCC 700930 / 2457T / Serotype 2a</strain>
    </source>
</reference>
<gene>
    <name evidence="1" type="primary">bipA</name>
    <name type="ordered locus">SF3941</name>
    <name type="ordered locus">S3805</name>
</gene>
<comment type="function">
    <text evidence="1">A 50S ribosomal subunit assembly protein with GTPase activity, required for 50S subunit assembly at low temperatures, may also play a role in translation. Binds GTP and analogs. Binds the 70S ribosome between the 30S and 50S subunits, in a similar position as ribosome-bound EF-G; it contacts a number of ribosomal proteins, both rRNAs and the A-site tRNA.</text>
</comment>
<comment type="catalytic activity">
    <reaction evidence="1">
        <text>GTP + H2O = GDP + phosphate + H(+)</text>
        <dbReference type="Rhea" id="RHEA:19669"/>
        <dbReference type="ChEBI" id="CHEBI:15377"/>
        <dbReference type="ChEBI" id="CHEBI:15378"/>
        <dbReference type="ChEBI" id="CHEBI:37565"/>
        <dbReference type="ChEBI" id="CHEBI:43474"/>
        <dbReference type="ChEBI" id="CHEBI:58189"/>
    </reaction>
</comment>
<comment type="subunit">
    <text evidence="1">Monomer.</text>
</comment>
<comment type="subcellular location">
    <subcellularLocation>
        <location evidence="1">Cytoplasm</location>
    </subcellularLocation>
    <text evidence="1">Binds to ribosomes.</text>
</comment>
<comment type="similarity">
    <text evidence="1">Belongs to the TRAFAC class translation factor GTPase superfamily. Classic translation factor GTPase family. BipA subfamily.</text>
</comment>
<protein>
    <recommendedName>
        <fullName evidence="1">Large ribosomal subunit assembly factor BipA</fullName>
        <ecNumber evidence="1">3.6.5.-</ecNumber>
    </recommendedName>
    <alternativeName>
        <fullName evidence="2">50S ribosomal subunit assembly factor BipA</fullName>
    </alternativeName>
    <alternativeName>
        <fullName evidence="1">GTP-binding protein BipA</fullName>
    </alternativeName>
</protein>
<accession>P0A3B4</accession>
<accession>Q9EXN7</accession>